<feature type="chain" id="PRO_1000138689" description="Probable malonic semialdehyde reductase RutE">
    <location>
        <begin position="1"/>
        <end position="196"/>
    </location>
</feature>
<protein>
    <recommendedName>
        <fullName evidence="1">Probable malonic semialdehyde reductase RutE</fullName>
        <ecNumber evidence="1">1.1.1.298</ecNumber>
    </recommendedName>
</protein>
<accession>B7MIF5</accession>
<proteinExistence type="inferred from homology"/>
<name>RUTE_ECO45</name>
<comment type="function">
    <text evidence="1">May reduce toxic product malonic semialdehyde to 3-hydroxypropionic acid, which is excreted.</text>
</comment>
<comment type="catalytic activity">
    <reaction evidence="1">
        <text>3-hydroxypropanoate + NADP(+) = 3-oxopropanoate + NADPH + H(+)</text>
        <dbReference type="Rhea" id="RHEA:26438"/>
        <dbReference type="ChEBI" id="CHEBI:15378"/>
        <dbReference type="ChEBI" id="CHEBI:16510"/>
        <dbReference type="ChEBI" id="CHEBI:33190"/>
        <dbReference type="ChEBI" id="CHEBI:57783"/>
        <dbReference type="ChEBI" id="CHEBI:58349"/>
        <dbReference type="EC" id="1.1.1.298"/>
    </reaction>
</comment>
<comment type="cofactor">
    <cofactor evidence="1">
        <name>FMN</name>
        <dbReference type="ChEBI" id="CHEBI:58210"/>
    </cofactor>
</comment>
<comment type="induction">
    <text evidence="1">Up-regulated by the nitrogen regulatory protein C (NtrC also called GlnG) and repressed by RutR.</text>
</comment>
<comment type="similarity">
    <text evidence="1">Belongs to the nitroreductase family. HadB/RutE subfamily.</text>
</comment>
<sequence length="196" mass="21625">MNEAVSPGALSTLFTDARTHNGWRETPVSDETLREIYALMKWGPTSANCSPARIVFIRTAEGKERLRPALSSGNLQKTLTAPVTAIVAWDSEFYERLPQLFPHGDARSWFTSSPQLAEETAFRNSSMQAAYLIFACRALGLDTGPMSGFDRQYVDDAFFAGSTLKSNLLINIGYGDSSKLFARLPRLSFEEACGLL</sequence>
<evidence type="ECO:0000255" key="1">
    <source>
        <dbReference type="HAMAP-Rule" id="MF_01204"/>
    </source>
</evidence>
<dbReference type="EC" id="1.1.1.298" evidence="1"/>
<dbReference type="EMBL" id="CU928161">
    <property type="protein sequence ID" value="CAR02355.1"/>
    <property type="molecule type" value="Genomic_DNA"/>
</dbReference>
<dbReference type="RefSeq" id="WP_001001168.1">
    <property type="nucleotide sequence ID" value="NC_011742.1"/>
</dbReference>
<dbReference type="SMR" id="B7MIF5"/>
<dbReference type="KEGG" id="ecz:ECS88_1024"/>
<dbReference type="HOGENOM" id="CLU_084441_0_0_6"/>
<dbReference type="Proteomes" id="UP000000747">
    <property type="component" value="Chromosome"/>
</dbReference>
<dbReference type="GO" id="GO:0035527">
    <property type="term" value="F:3-hydroxypropionate dehydrogenase (NADP+) activity"/>
    <property type="evidence" value="ECO:0007669"/>
    <property type="project" value="UniProtKB-UniRule"/>
</dbReference>
<dbReference type="GO" id="GO:0019740">
    <property type="term" value="P:nitrogen utilization"/>
    <property type="evidence" value="ECO:0007669"/>
    <property type="project" value="UniProtKB-UniRule"/>
</dbReference>
<dbReference type="GO" id="GO:0006212">
    <property type="term" value="P:uracil catabolic process"/>
    <property type="evidence" value="ECO:0007669"/>
    <property type="project" value="UniProtKB-UniRule"/>
</dbReference>
<dbReference type="CDD" id="cd02148">
    <property type="entry name" value="RutE-like"/>
    <property type="match status" value="1"/>
</dbReference>
<dbReference type="FunFam" id="3.40.109.10:FF:000003">
    <property type="entry name" value="Probable malonic semialdehyde reductase RutE"/>
    <property type="match status" value="1"/>
</dbReference>
<dbReference type="Gene3D" id="3.40.109.10">
    <property type="entry name" value="NADH Oxidase"/>
    <property type="match status" value="1"/>
</dbReference>
<dbReference type="HAMAP" id="MF_01204">
    <property type="entry name" value="Oxidoreductase_RutE_HadB"/>
    <property type="match status" value="1"/>
</dbReference>
<dbReference type="InterPro" id="IPR029479">
    <property type="entry name" value="Nitroreductase"/>
</dbReference>
<dbReference type="InterPro" id="IPR000415">
    <property type="entry name" value="Nitroreductase-like"/>
</dbReference>
<dbReference type="InterPro" id="IPR050461">
    <property type="entry name" value="Nitroreductase_HadB/RutE"/>
</dbReference>
<dbReference type="InterPro" id="IPR023936">
    <property type="entry name" value="RutE-like"/>
</dbReference>
<dbReference type="NCBIfam" id="NF003768">
    <property type="entry name" value="PRK05365.1"/>
    <property type="match status" value="1"/>
</dbReference>
<dbReference type="PANTHER" id="PTHR43543">
    <property type="entry name" value="MALONIC SEMIALDEHYDE REDUCTASE RUTE-RELATED"/>
    <property type="match status" value="1"/>
</dbReference>
<dbReference type="PANTHER" id="PTHR43543:SF1">
    <property type="entry name" value="MALONIC SEMIALDEHYDE REDUCTASE RUTE-RELATED"/>
    <property type="match status" value="1"/>
</dbReference>
<dbReference type="Pfam" id="PF00881">
    <property type="entry name" value="Nitroreductase"/>
    <property type="match status" value="1"/>
</dbReference>
<dbReference type="SUPFAM" id="SSF55469">
    <property type="entry name" value="FMN-dependent nitroreductase-like"/>
    <property type="match status" value="1"/>
</dbReference>
<organism>
    <name type="scientific">Escherichia coli O45:K1 (strain S88 / ExPEC)</name>
    <dbReference type="NCBI Taxonomy" id="585035"/>
    <lineage>
        <taxon>Bacteria</taxon>
        <taxon>Pseudomonadati</taxon>
        <taxon>Pseudomonadota</taxon>
        <taxon>Gammaproteobacteria</taxon>
        <taxon>Enterobacterales</taxon>
        <taxon>Enterobacteriaceae</taxon>
        <taxon>Escherichia</taxon>
    </lineage>
</organism>
<gene>
    <name evidence="1" type="primary">rutE</name>
    <name type="ordered locus">ECS88_1024</name>
</gene>
<keyword id="KW-0285">Flavoprotein</keyword>
<keyword id="KW-0288">FMN</keyword>
<keyword id="KW-0520">NAD</keyword>
<keyword id="KW-0521">NADP</keyword>
<keyword id="KW-0560">Oxidoreductase</keyword>
<keyword id="KW-1185">Reference proteome</keyword>
<reference key="1">
    <citation type="journal article" date="2009" name="PLoS Genet.">
        <title>Organised genome dynamics in the Escherichia coli species results in highly diverse adaptive paths.</title>
        <authorList>
            <person name="Touchon M."/>
            <person name="Hoede C."/>
            <person name="Tenaillon O."/>
            <person name="Barbe V."/>
            <person name="Baeriswyl S."/>
            <person name="Bidet P."/>
            <person name="Bingen E."/>
            <person name="Bonacorsi S."/>
            <person name="Bouchier C."/>
            <person name="Bouvet O."/>
            <person name="Calteau A."/>
            <person name="Chiapello H."/>
            <person name="Clermont O."/>
            <person name="Cruveiller S."/>
            <person name="Danchin A."/>
            <person name="Diard M."/>
            <person name="Dossat C."/>
            <person name="Karoui M.E."/>
            <person name="Frapy E."/>
            <person name="Garry L."/>
            <person name="Ghigo J.M."/>
            <person name="Gilles A.M."/>
            <person name="Johnson J."/>
            <person name="Le Bouguenec C."/>
            <person name="Lescat M."/>
            <person name="Mangenot S."/>
            <person name="Martinez-Jehanne V."/>
            <person name="Matic I."/>
            <person name="Nassif X."/>
            <person name="Oztas S."/>
            <person name="Petit M.A."/>
            <person name="Pichon C."/>
            <person name="Rouy Z."/>
            <person name="Ruf C.S."/>
            <person name="Schneider D."/>
            <person name="Tourret J."/>
            <person name="Vacherie B."/>
            <person name="Vallenet D."/>
            <person name="Medigue C."/>
            <person name="Rocha E.P.C."/>
            <person name="Denamur E."/>
        </authorList>
    </citation>
    <scope>NUCLEOTIDE SEQUENCE [LARGE SCALE GENOMIC DNA]</scope>
    <source>
        <strain>S88 / ExPEC</strain>
    </source>
</reference>